<name>EFP_MYCUA</name>
<protein>
    <recommendedName>
        <fullName evidence="1">Elongation factor P</fullName>
        <shortName evidence="1">EF-P</shortName>
    </recommendedName>
</protein>
<accession>A0PPH6</accession>
<evidence type="ECO:0000255" key="1">
    <source>
        <dbReference type="HAMAP-Rule" id="MF_00141"/>
    </source>
</evidence>
<comment type="function">
    <text evidence="1">Involved in peptide bond synthesis. Stimulates efficient translation and peptide-bond synthesis on native or reconstituted 70S ribosomes in vitro. Probably functions indirectly by altering the affinity of the ribosome for aminoacyl-tRNA, thus increasing their reactivity as acceptors for peptidyl transferase.</text>
</comment>
<comment type="pathway">
    <text evidence="1">Protein biosynthesis; polypeptide chain elongation.</text>
</comment>
<comment type="subcellular location">
    <subcellularLocation>
        <location evidence="1">Cytoplasm</location>
    </subcellularLocation>
</comment>
<comment type="similarity">
    <text evidence="1">Belongs to the elongation factor P family.</text>
</comment>
<sequence>MASTADFKNGLVLQIDGQLWSIVEFQHVKPGKGPAFVRTKLKNVLSGKVVDKTYNAGVKVETATVDRRDTTYLYRDGSDFVFMDSQDYEQHPLPESLVGDAARFLLEGMPVQVAFHDGAPLYIELPVTVEFVVTHTEPGLQGDRSSAGTKPATLETGAQINVPLFINTGDKLKVDSRDGGYLGRVNA</sequence>
<feature type="chain" id="PRO_1000010788" description="Elongation factor P">
    <location>
        <begin position="1"/>
        <end position="187"/>
    </location>
</feature>
<reference key="1">
    <citation type="journal article" date="2007" name="Genome Res.">
        <title>Reductive evolution and niche adaptation inferred from the genome of Mycobacterium ulcerans, the causative agent of Buruli ulcer.</title>
        <authorList>
            <person name="Stinear T.P."/>
            <person name="Seemann T."/>
            <person name="Pidot S."/>
            <person name="Frigui W."/>
            <person name="Reysset G."/>
            <person name="Garnier T."/>
            <person name="Meurice G."/>
            <person name="Simon D."/>
            <person name="Bouchier C."/>
            <person name="Ma L."/>
            <person name="Tichit M."/>
            <person name="Porter J.L."/>
            <person name="Ryan J."/>
            <person name="Johnson P.D.R."/>
            <person name="Davies J.K."/>
            <person name="Jenkin G.A."/>
            <person name="Small P.L.C."/>
            <person name="Jones L.M."/>
            <person name="Tekaia F."/>
            <person name="Laval F."/>
            <person name="Daffe M."/>
            <person name="Parkhill J."/>
            <person name="Cole S.T."/>
        </authorList>
    </citation>
    <scope>NUCLEOTIDE SEQUENCE [LARGE SCALE GENOMIC DNA]</scope>
    <source>
        <strain>Agy99</strain>
    </source>
</reference>
<gene>
    <name evidence="1" type="primary">efp</name>
    <name type="ordered locus">MUL_1765</name>
</gene>
<organism>
    <name type="scientific">Mycobacterium ulcerans (strain Agy99)</name>
    <dbReference type="NCBI Taxonomy" id="362242"/>
    <lineage>
        <taxon>Bacteria</taxon>
        <taxon>Bacillati</taxon>
        <taxon>Actinomycetota</taxon>
        <taxon>Actinomycetes</taxon>
        <taxon>Mycobacteriales</taxon>
        <taxon>Mycobacteriaceae</taxon>
        <taxon>Mycobacterium</taxon>
        <taxon>Mycobacterium ulcerans group</taxon>
    </lineage>
</organism>
<proteinExistence type="inferred from homology"/>
<keyword id="KW-0963">Cytoplasm</keyword>
<keyword id="KW-0251">Elongation factor</keyword>
<keyword id="KW-0648">Protein biosynthesis</keyword>
<dbReference type="EMBL" id="CP000325">
    <property type="protein sequence ID" value="ABL04245.1"/>
    <property type="molecule type" value="Genomic_DNA"/>
</dbReference>
<dbReference type="RefSeq" id="WP_011739865.1">
    <property type="nucleotide sequence ID" value="NC_008611.1"/>
</dbReference>
<dbReference type="SMR" id="A0PPH6"/>
<dbReference type="KEGG" id="mul:MUL_1765"/>
<dbReference type="eggNOG" id="COG0231">
    <property type="taxonomic scope" value="Bacteria"/>
</dbReference>
<dbReference type="HOGENOM" id="CLU_074944_0_1_11"/>
<dbReference type="UniPathway" id="UPA00345"/>
<dbReference type="Proteomes" id="UP000000765">
    <property type="component" value="Chromosome"/>
</dbReference>
<dbReference type="GO" id="GO:0005737">
    <property type="term" value="C:cytoplasm"/>
    <property type="evidence" value="ECO:0007669"/>
    <property type="project" value="UniProtKB-SubCell"/>
</dbReference>
<dbReference type="GO" id="GO:0003746">
    <property type="term" value="F:translation elongation factor activity"/>
    <property type="evidence" value="ECO:0007669"/>
    <property type="project" value="UniProtKB-UniRule"/>
</dbReference>
<dbReference type="GO" id="GO:0043043">
    <property type="term" value="P:peptide biosynthetic process"/>
    <property type="evidence" value="ECO:0007669"/>
    <property type="project" value="InterPro"/>
</dbReference>
<dbReference type="CDD" id="cd04470">
    <property type="entry name" value="S1_EF-P_repeat_1"/>
    <property type="match status" value="1"/>
</dbReference>
<dbReference type="CDD" id="cd05794">
    <property type="entry name" value="S1_EF-P_repeat_2"/>
    <property type="match status" value="1"/>
</dbReference>
<dbReference type="FunFam" id="2.30.30.30:FF:000003">
    <property type="entry name" value="Elongation factor P"/>
    <property type="match status" value="1"/>
</dbReference>
<dbReference type="FunFam" id="2.40.50.140:FF:000004">
    <property type="entry name" value="Elongation factor P"/>
    <property type="match status" value="1"/>
</dbReference>
<dbReference type="FunFam" id="2.40.50.140:FF:000009">
    <property type="entry name" value="Elongation factor P"/>
    <property type="match status" value="1"/>
</dbReference>
<dbReference type="Gene3D" id="2.30.30.30">
    <property type="match status" value="1"/>
</dbReference>
<dbReference type="Gene3D" id="2.40.50.140">
    <property type="entry name" value="Nucleic acid-binding proteins"/>
    <property type="match status" value="2"/>
</dbReference>
<dbReference type="HAMAP" id="MF_00141">
    <property type="entry name" value="EF_P"/>
    <property type="match status" value="1"/>
</dbReference>
<dbReference type="InterPro" id="IPR015365">
    <property type="entry name" value="Elong-fact-P_C"/>
</dbReference>
<dbReference type="InterPro" id="IPR012340">
    <property type="entry name" value="NA-bd_OB-fold"/>
</dbReference>
<dbReference type="InterPro" id="IPR014722">
    <property type="entry name" value="Rib_uL2_dom2"/>
</dbReference>
<dbReference type="InterPro" id="IPR020599">
    <property type="entry name" value="Transl_elong_fac_P/YeiP"/>
</dbReference>
<dbReference type="InterPro" id="IPR013185">
    <property type="entry name" value="Transl_elong_KOW-like"/>
</dbReference>
<dbReference type="InterPro" id="IPR001059">
    <property type="entry name" value="Transl_elong_P/YeiP_cen"/>
</dbReference>
<dbReference type="InterPro" id="IPR013852">
    <property type="entry name" value="Transl_elong_P/YeiP_CS"/>
</dbReference>
<dbReference type="InterPro" id="IPR011768">
    <property type="entry name" value="Transl_elongation_fac_P"/>
</dbReference>
<dbReference type="InterPro" id="IPR008991">
    <property type="entry name" value="Translation_prot_SH3-like_sf"/>
</dbReference>
<dbReference type="NCBIfam" id="TIGR00038">
    <property type="entry name" value="efp"/>
    <property type="match status" value="1"/>
</dbReference>
<dbReference type="NCBIfam" id="NF001810">
    <property type="entry name" value="PRK00529.1"/>
    <property type="match status" value="1"/>
</dbReference>
<dbReference type="PANTHER" id="PTHR30053">
    <property type="entry name" value="ELONGATION FACTOR P"/>
    <property type="match status" value="1"/>
</dbReference>
<dbReference type="PANTHER" id="PTHR30053:SF12">
    <property type="entry name" value="ELONGATION FACTOR P (EF-P) FAMILY PROTEIN"/>
    <property type="match status" value="1"/>
</dbReference>
<dbReference type="Pfam" id="PF01132">
    <property type="entry name" value="EFP"/>
    <property type="match status" value="1"/>
</dbReference>
<dbReference type="Pfam" id="PF08207">
    <property type="entry name" value="EFP_N"/>
    <property type="match status" value="1"/>
</dbReference>
<dbReference type="Pfam" id="PF09285">
    <property type="entry name" value="Elong-fact-P_C"/>
    <property type="match status" value="1"/>
</dbReference>
<dbReference type="PIRSF" id="PIRSF005901">
    <property type="entry name" value="EF-P"/>
    <property type="match status" value="1"/>
</dbReference>
<dbReference type="SMART" id="SM01185">
    <property type="entry name" value="EFP"/>
    <property type="match status" value="1"/>
</dbReference>
<dbReference type="SMART" id="SM00841">
    <property type="entry name" value="Elong-fact-P_C"/>
    <property type="match status" value="1"/>
</dbReference>
<dbReference type="SUPFAM" id="SSF50249">
    <property type="entry name" value="Nucleic acid-binding proteins"/>
    <property type="match status" value="2"/>
</dbReference>
<dbReference type="SUPFAM" id="SSF50104">
    <property type="entry name" value="Translation proteins SH3-like domain"/>
    <property type="match status" value="1"/>
</dbReference>
<dbReference type="PROSITE" id="PS01275">
    <property type="entry name" value="EFP"/>
    <property type="match status" value="1"/>
</dbReference>